<comment type="developmental stage">
    <text evidence="1">Preferentially expressed in prespore cells.</text>
</comment>
<evidence type="ECO:0000269" key="1">
    <source>
    </source>
</evidence>
<reference key="1">
    <citation type="journal article" date="2002" name="Nature">
        <title>Sequence and analysis of chromosome 2 of Dictyostelium discoideum.</title>
        <authorList>
            <person name="Gloeckner G."/>
            <person name="Eichinger L."/>
            <person name="Szafranski K."/>
            <person name="Pachebat J.A."/>
            <person name="Bankier A.T."/>
            <person name="Dear P.H."/>
            <person name="Lehmann R."/>
            <person name="Baumgart C."/>
            <person name="Parra G."/>
            <person name="Abril J.F."/>
            <person name="Guigo R."/>
            <person name="Kumpf K."/>
            <person name="Tunggal B."/>
            <person name="Cox E.C."/>
            <person name="Quail M.A."/>
            <person name="Platzer M."/>
            <person name="Rosenthal A."/>
            <person name="Noegel A.A."/>
        </authorList>
    </citation>
    <scope>NUCLEOTIDE SEQUENCE [LARGE SCALE GENOMIC DNA]</scope>
    <source>
        <strain>AX4</strain>
    </source>
</reference>
<reference key="2">
    <citation type="journal article" date="2005" name="Nature">
        <title>The genome of the social amoeba Dictyostelium discoideum.</title>
        <authorList>
            <person name="Eichinger L."/>
            <person name="Pachebat J.A."/>
            <person name="Gloeckner G."/>
            <person name="Rajandream M.A."/>
            <person name="Sucgang R."/>
            <person name="Berriman M."/>
            <person name="Song J."/>
            <person name="Olsen R."/>
            <person name="Szafranski K."/>
            <person name="Xu Q."/>
            <person name="Tunggal B."/>
            <person name="Kummerfeld S."/>
            <person name="Madera M."/>
            <person name="Konfortov B.A."/>
            <person name="Rivero F."/>
            <person name="Bankier A.T."/>
            <person name="Lehmann R."/>
            <person name="Hamlin N."/>
            <person name="Davies R."/>
            <person name="Gaudet P."/>
            <person name="Fey P."/>
            <person name="Pilcher K."/>
            <person name="Chen G."/>
            <person name="Saunders D."/>
            <person name="Sodergren E.J."/>
            <person name="Davis P."/>
            <person name="Kerhornou A."/>
            <person name="Nie X."/>
            <person name="Hall N."/>
            <person name="Anjard C."/>
            <person name="Hemphill L."/>
            <person name="Bason N."/>
            <person name="Farbrother P."/>
            <person name="Desany B."/>
            <person name="Just E."/>
            <person name="Morio T."/>
            <person name="Rost R."/>
            <person name="Churcher C.M."/>
            <person name="Cooper J."/>
            <person name="Haydock S."/>
            <person name="van Driessche N."/>
            <person name="Cronin A."/>
            <person name="Goodhead I."/>
            <person name="Muzny D.M."/>
            <person name="Mourier T."/>
            <person name="Pain A."/>
            <person name="Lu M."/>
            <person name="Harper D."/>
            <person name="Lindsay R."/>
            <person name="Hauser H."/>
            <person name="James K.D."/>
            <person name="Quiles M."/>
            <person name="Madan Babu M."/>
            <person name="Saito T."/>
            <person name="Buchrieser C."/>
            <person name="Wardroper A."/>
            <person name="Felder M."/>
            <person name="Thangavelu M."/>
            <person name="Johnson D."/>
            <person name="Knights A."/>
            <person name="Loulseged H."/>
            <person name="Mungall K.L."/>
            <person name="Oliver K."/>
            <person name="Price C."/>
            <person name="Quail M.A."/>
            <person name="Urushihara H."/>
            <person name="Hernandez J."/>
            <person name="Rabbinowitsch E."/>
            <person name="Steffen D."/>
            <person name="Sanders M."/>
            <person name="Ma J."/>
            <person name="Kohara Y."/>
            <person name="Sharp S."/>
            <person name="Simmonds M.N."/>
            <person name="Spiegler S."/>
            <person name="Tivey A."/>
            <person name="Sugano S."/>
            <person name="White B."/>
            <person name="Walker D."/>
            <person name="Woodward J.R."/>
            <person name="Winckler T."/>
            <person name="Tanaka Y."/>
            <person name="Shaulsky G."/>
            <person name="Schleicher M."/>
            <person name="Weinstock G.M."/>
            <person name="Rosenthal A."/>
            <person name="Cox E.C."/>
            <person name="Chisholm R.L."/>
            <person name="Gibbs R.A."/>
            <person name="Loomis W.F."/>
            <person name="Platzer M."/>
            <person name="Kay R.R."/>
            <person name="Williams J.G."/>
            <person name="Dear P.H."/>
            <person name="Noegel A.A."/>
            <person name="Barrell B.G."/>
            <person name="Kuspa A."/>
        </authorList>
    </citation>
    <scope>NUCLEOTIDE SEQUENCE [LARGE SCALE GENOMIC DNA]</scope>
    <source>
        <strain>AX4</strain>
    </source>
</reference>
<reference key="3">
    <citation type="journal article" date="2004" name="Eukaryot. Cell">
        <title>Control of cell type proportioning in Dictyostelium discoideum by differentiation-inducing factor as determined by in situ hybridization.</title>
        <authorList>
            <person name="Maruo T."/>
            <person name="Sakamoto H."/>
            <person name="Iranfar N."/>
            <person name="Fuller D."/>
            <person name="Morio T."/>
            <person name="Urushihara H."/>
            <person name="Tanaka Y."/>
            <person name="Maeda M."/>
            <person name="Loomis W.F."/>
        </authorList>
    </citation>
    <scope>DEVELOPMENTAL STAGE [LARGE SCALE ANALYSIS]</scope>
</reference>
<dbReference type="EMBL" id="AAFI02000014">
    <property type="protein sequence ID" value="EAS66913.1"/>
    <property type="molecule type" value="Genomic_DNA"/>
</dbReference>
<dbReference type="RefSeq" id="XP_001134597.1">
    <property type="nucleotide sequence ID" value="XM_001134597.1"/>
</dbReference>
<dbReference type="SMR" id="Q86IA1"/>
<dbReference type="PaxDb" id="44689-DDB0231646"/>
<dbReference type="EnsemblProtists" id="EAS66913">
    <property type="protein sequence ID" value="EAS66913"/>
    <property type="gene ID" value="DDB_G0276165"/>
</dbReference>
<dbReference type="GeneID" id="8620405"/>
<dbReference type="KEGG" id="ddi:DDB_G0276165"/>
<dbReference type="dictyBase" id="DDB_G0276165"/>
<dbReference type="VEuPathDB" id="AmoebaDB:DDB_G0276165"/>
<dbReference type="HOGENOM" id="CLU_2946464_0_0_1"/>
<dbReference type="InParanoid" id="Q86IA1"/>
<dbReference type="PRO" id="PR:Q86IA1"/>
<dbReference type="Proteomes" id="UP000002195">
    <property type="component" value="Chromosome 2"/>
</dbReference>
<accession>Q86IA1</accession>
<accession>Q1ZXK6</accession>
<proteinExistence type="evidence at transcript level"/>
<gene>
    <name type="ORF">DDB_G0276165</name>
</gene>
<protein>
    <recommendedName>
        <fullName>Uncharacterized protein DDB_G0276165</fullName>
    </recommendedName>
</protein>
<keyword id="KW-1185">Reference proteome</keyword>
<sequence>MTILKSISSMGISNRKNSFSFVSTNSMIETNQNVNSVSKSGYSKLIKGAALMAEGISGFF</sequence>
<name>Y6165_DICDI</name>
<feature type="chain" id="PRO_0000392668" description="Uncharacterized protein DDB_G0276165">
    <location>
        <begin position="1"/>
        <end position="60"/>
    </location>
</feature>
<organism>
    <name type="scientific">Dictyostelium discoideum</name>
    <name type="common">Social amoeba</name>
    <dbReference type="NCBI Taxonomy" id="44689"/>
    <lineage>
        <taxon>Eukaryota</taxon>
        <taxon>Amoebozoa</taxon>
        <taxon>Evosea</taxon>
        <taxon>Eumycetozoa</taxon>
        <taxon>Dictyostelia</taxon>
        <taxon>Dictyosteliales</taxon>
        <taxon>Dictyosteliaceae</taxon>
        <taxon>Dictyostelium</taxon>
    </lineage>
</organism>